<dbReference type="EC" id="7.2.1.3" evidence="5"/>
<dbReference type="EMBL" id="AF132115">
    <property type="protein sequence ID" value="AAD45585.1"/>
    <property type="molecule type" value="Genomic_DNA"/>
</dbReference>
<dbReference type="EMBL" id="AB049627">
    <property type="protein sequence ID" value="BAB21521.1"/>
    <property type="molecule type" value="mRNA"/>
</dbReference>
<dbReference type="EMBL" id="AB005231">
    <property type="protein sequence ID" value="BAB10153.1"/>
    <property type="molecule type" value="Genomic_DNA"/>
</dbReference>
<dbReference type="EMBL" id="CP002688">
    <property type="protein sequence ID" value="AED94343.1"/>
    <property type="molecule type" value="Genomic_DNA"/>
</dbReference>
<dbReference type="EMBL" id="BT024611">
    <property type="protein sequence ID" value="ABD43009.1"/>
    <property type="molecule type" value="mRNA"/>
</dbReference>
<dbReference type="EMBL" id="AY085028">
    <property type="protein sequence ID" value="AAM61586.1"/>
    <property type="molecule type" value="mRNA"/>
</dbReference>
<dbReference type="EMBL" id="AK117270">
    <property type="protein sequence ID" value="BAC41943.1"/>
    <property type="molecule type" value="mRNA"/>
</dbReference>
<dbReference type="EMBL" id="Z26702">
    <property type="protein sequence ID" value="CAA81401.1"/>
    <property type="molecule type" value="mRNA"/>
</dbReference>
<dbReference type="RefSeq" id="NP_198679.1">
    <property type="nucleotide sequence ID" value="NM_123224.3"/>
</dbReference>
<dbReference type="PDB" id="4O6Y">
    <property type="method" value="X-ray"/>
    <property type="resolution" value="1.70 A"/>
    <property type="chains" value="A/B=1-230"/>
</dbReference>
<dbReference type="PDB" id="4O79">
    <property type="method" value="X-ray"/>
    <property type="resolution" value="2.00 A"/>
    <property type="chains" value="A/B=1-230"/>
</dbReference>
<dbReference type="PDB" id="4O7G">
    <property type="method" value="X-ray"/>
    <property type="resolution" value="2.21 A"/>
    <property type="chains" value="A/B=1-230"/>
</dbReference>
<dbReference type="PDBsum" id="4O6Y"/>
<dbReference type="PDBsum" id="4O79"/>
<dbReference type="PDBsum" id="4O7G"/>
<dbReference type="SMR" id="Q9SWS1"/>
<dbReference type="FunCoup" id="Q9SWS1">
    <property type="interactions" value="1767"/>
</dbReference>
<dbReference type="STRING" id="3702.Q9SWS1"/>
<dbReference type="TCDB" id="5.B.2.1.8">
    <property type="family name" value="the eukaryotic cytochrome b561 (cytb561) family"/>
</dbReference>
<dbReference type="PaxDb" id="3702-AT5G38630.1"/>
<dbReference type="ProteomicsDB" id="244342"/>
<dbReference type="EnsemblPlants" id="AT5G38630.1">
    <property type="protein sequence ID" value="AT5G38630.1"/>
    <property type="gene ID" value="AT5G38630"/>
</dbReference>
<dbReference type="GeneID" id="833853"/>
<dbReference type="Gramene" id="AT5G38630.1">
    <property type="protein sequence ID" value="AT5G38630.1"/>
    <property type="gene ID" value="AT5G38630"/>
</dbReference>
<dbReference type="KEGG" id="ath:AT5G38630"/>
<dbReference type="Araport" id="AT5G38630"/>
<dbReference type="TAIR" id="AT5G38630">
    <property type="gene designation" value="CYB-1"/>
</dbReference>
<dbReference type="eggNOG" id="KOG1619">
    <property type="taxonomic scope" value="Eukaryota"/>
</dbReference>
<dbReference type="HOGENOM" id="CLU_069712_0_1_1"/>
<dbReference type="InParanoid" id="Q9SWS1"/>
<dbReference type="OMA" id="LHFRGGM"/>
<dbReference type="OrthoDB" id="907479at2759"/>
<dbReference type="PhylomeDB" id="Q9SWS1"/>
<dbReference type="BRENDA" id="7.2.1.3">
    <property type="organism ID" value="399"/>
</dbReference>
<dbReference type="EvolutionaryTrace" id="Q9SWS1"/>
<dbReference type="PRO" id="PR:Q9SWS1"/>
<dbReference type="Proteomes" id="UP000006548">
    <property type="component" value="Chromosome 5"/>
</dbReference>
<dbReference type="ExpressionAtlas" id="Q9SWS1">
    <property type="expression patterns" value="baseline and differential"/>
</dbReference>
<dbReference type="GO" id="GO:0005794">
    <property type="term" value="C:Golgi apparatus"/>
    <property type="evidence" value="ECO:0007005"/>
    <property type="project" value="TAIR"/>
</dbReference>
<dbReference type="GO" id="GO:0016020">
    <property type="term" value="C:membrane"/>
    <property type="evidence" value="ECO:0007669"/>
    <property type="project" value="UniProtKB-SubCell"/>
</dbReference>
<dbReference type="GO" id="GO:0000293">
    <property type="term" value="F:ferric-chelate reductase activity"/>
    <property type="evidence" value="ECO:0000314"/>
    <property type="project" value="TAIR"/>
</dbReference>
<dbReference type="GO" id="GO:0046872">
    <property type="term" value="F:metal ion binding"/>
    <property type="evidence" value="ECO:0007669"/>
    <property type="project" value="UniProtKB-KW"/>
</dbReference>
<dbReference type="GO" id="GO:0140571">
    <property type="term" value="F:transmembrane ascorbate ferrireductase activity"/>
    <property type="evidence" value="ECO:0007669"/>
    <property type="project" value="UniProtKB-EC"/>
</dbReference>
<dbReference type="GO" id="GO:0019852">
    <property type="term" value="P:L-ascorbic acid metabolic process"/>
    <property type="evidence" value="ECO:0000314"/>
    <property type="project" value="TAIR"/>
</dbReference>
<dbReference type="CDD" id="cd08766">
    <property type="entry name" value="Cyt_b561_ACYB-1_like"/>
    <property type="match status" value="1"/>
</dbReference>
<dbReference type="FunFam" id="1.20.120.1770:FF:000001">
    <property type="entry name" value="Cytochrome b reductase 1"/>
    <property type="match status" value="1"/>
</dbReference>
<dbReference type="Gene3D" id="1.20.120.1770">
    <property type="match status" value="1"/>
</dbReference>
<dbReference type="InterPro" id="IPR043205">
    <property type="entry name" value="CYB561/CYBRD1-like"/>
</dbReference>
<dbReference type="InterPro" id="IPR006593">
    <property type="entry name" value="Cyt_b561/ferric_Rdtase_TM"/>
</dbReference>
<dbReference type="PANTHER" id="PTHR10106">
    <property type="entry name" value="CYTOCHROME B561-RELATED"/>
    <property type="match status" value="1"/>
</dbReference>
<dbReference type="PANTHER" id="PTHR10106:SF0">
    <property type="entry name" value="LD36721P"/>
    <property type="match status" value="1"/>
</dbReference>
<dbReference type="Pfam" id="PF03188">
    <property type="entry name" value="Cytochrom_B561"/>
    <property type="match status" value="1"/>
</dbReference>
<dbReference type="SMART" id="SM00665">
    <property type="entry name" value="B561"/>
    <property type="match status" value="1"/>
</dbReference>
<dbReference type="PROSITE" id="PS50939">
    <property type="entry name" value="CYTOCHROME_B561"/>
    <property type="match status" value="1"/>
</dbReference>
<name>ACFR2_ARATH</name>
<gene>
    <name type="primary">CYB561B</name>
    <name type="synonym">ACYB-1</name>
    <name type="synonym">CYB-1</name>
    <name type="synonym">CYB561B2</name>
    <name type="synonym">CYBASC2</name>
    <name type="synonym">CYTB561</name>
    <name type="ordered locus">At5g38630</name>
    <name type="ORF">MBB18.18</name>
</gene>
<comment type="function">
    <text evidence="4 5">Two-heme-containing cytochrome (PubMed:24449903). Catalyzes ascorbate-dependent transmembrane ferric-chelate reduction (Probable).</text>
</comment>
<comment type="catalytic activity">
    <reaction evidence="5">
        <text>Fe(3+)(out) + L-ascorbate(in) = monodehydro-L-ascorbate radical(in) + Fe(2+)(out) + H(+)</text>
        <dbReference type="Rhea" id="RHEA:30403"/>
        <dbReference type="ChEBI" id="CHEBI:15378"/>
        <dbReference type="ChEBI" id="CHEBI:29033"/>
        <dbReference type="ChEBI" id="CHEBI:29034"/>
        <dbReference type="ChEBI" id="CHEBI:38290"/>
        <dbReference type="ChEBI" id="CHEBI:59513"/>
        <dbReference type="EC" id="7.2.1.3"/>
    </reaction>
</comment>
<comment type="cofactor">
    <cofactor evidence="4">
        <name>heme b</name>
        <dbReference type="ChEBI" id="CHEBI:60344"/>
    </cofactor>
    <text evidence="4">Binds 2 heme b groups non-covalently.</text>
</comment>
<comment type="subunit">
    <text evidence="4">Homodimer.</text>
</comment>
<comment type="subcellular location">
    <subcellularLocation>
        <location evidence="5">Membrane</location>
        <topology evidence="5">Multi-pass membrane protein</topology>
    </subcellularLocation>
</comment>
<comment type="tissue specificity">
    <text evidence="3">Expressed in roots, seedlings, leaves and flowers. Expressed in the L1 layer of the shoot apex, in the epidermis of leaf primordia and young leaves and in vascular bundles. In the differentiation zone of the root, detected in the pericycle and in the epidermis, but not in the cortex. Strongly expressed in the cortical region of the root tip, in the meristematic tissue and in the epidermal cell layer of lateral roots, but not in the root caps. Highly expressed in unfertilized ovules. In mature embryos, expressed in the epidermis, cotyledon tips and root tips.</text>
</comment>
<comment type="developmental stage">
    <text evidence="3">Strong reduction in expression levels in flowers following fertilization.</text>
</comment>
<sequence length="230" mass="25289">MAVPVLGGFPIFMVVRVLGFIIAALVLTWTVHYRGGLALSSDNKDHIFNVHPVMMVIGLILFNGEAMLAYKSVQGTKNLKKLVHLTLQLTAFILSLIGVWAALKFHIDKGIENFYSLHSWLGLACLFLFAFQWAAGFVTYWYPGGSRNSRASLMPWHVFLGISIYALALVTATTGILEKVTFLQVNQVITRYSTEAMLVNTMGVLILILGGFVILGVVTPVSGKDQVLTQ</sequence>
<evidence type="ECO:0000255" key="1"/>
<evidence type="ECO:0000255" key="2">
    <source>
        <dbReference type="PROSITE-ProRule" id="PRU00242"/>
    </source>
</evidence>
<evidence type="ECO:0000269" key="3">
    <source>
    </source>
</evidence>
<evidence type="ECO:0000269" key="4">
    <source>
    </source>
</evidence>
<evidence type="ECO:0000305" key="5">
    <source>
    </source>
</evidence>
<evidence type="ECO:0007829" key="6">
    <source>
        <dbReference type="PDB" id="4O6Y"/>
    </source>
</evidence>
<accession>Q9SWS1</accession>
<accession>Q42137</accession>
<proteinExistence type="evidence at protein level"/>
<keyword id="KW-0002">3D-structure</keyword>
<keyword id="KW-0249">Electron transport</keyword>
<keyword id="KW-0349">Heme</keyword>
<keyword id="KW-0408">Iron</keyword>
<keyword id="KW-0472">Membrane</keyword>
<keyword id="KW-0479">Metal-binding</keyword>
<keyword id="KW-1185">Reference proteome</keyword>
<keyword id="KW-1278">Translocase</keyword>
<keyword id="KW-0812">Transmembrane</keyword>
<keyword id="KW-1133">Transmembrane helix</keyword>
<keyword id="KW-0813">Transport</keyword>
<protein>
    <recommendedName>
        <fullName>Transmembrane ascorbate ferrireductase 2</fullName>
        <ecNumber evidence="5">7.2.1.3</ecNumber>
    </recommendedName>
    <alternativeName>
        <fullName>Cytochrome b561-1</fullName>
        <shortName>Artb561-2</shortName>
        <shortName>AtCytb561</shortName>
    </alternativeName>
    <alternativeName>
        <fullName>Protein b561A.tha4</fullName>
    </alternativeName>
</protein>
<organism>
    <name type="scientific">Arabidopsis thaliana</name>
    <name type="common">Mouse-ear cress</name>
    <dbReference type="NCBI Taxonomy" id="3702"/>
    <lineage>
        <taxon>Eukaryota</taxon>
        <taxon>Viridiplantae</taxon>
        <taxon>Streptophyta</taxon>
        <taxon>Embryophyta</taxon>
        <taxon>Tracheophyta</taxon>
        <taxon>Spermatophyta</taxon>
        <taxon>Magnoliopsida</taxon>
        <taxon>eudicotyledons</taxon>
        <taxon>Gunneridae</taxon>
        <taxon>Pentapetalae</taxon>
        <taxon>rosids</taxon>
        <taxon>malvids</taxon>
        <taxon>Brassicales</taxon>
        <taxon>Brassicaceae</taxon>
        <taxon>Camelineae</taxon>
        <taxon>Arabidopsis</taxon>
    </lineage>
</organism>
<reference key="1">
    <citation type="journal article" date="2000" name="Plant Physiol. Biochem.">
        <title>Arabidopsis thaliana sequence analysis confirms the presence of cyt b-561 in plants: Evidence for a novel protein family.</title>
        <authorList>
            <person name="Asard H."/>
            <person name="Terol-Alcayde J."/>
            <person name="Preger V."/>
            <person name="Del Favero J."/>
            <person name="Verelst W."/>
            <person name="Sparla F."/>
            <person name="Perez-Alonso M."/>
            <person name="Trost P."/>
        </authorList>
    </citation>
    <scope>NUCLEOTIDE SEQUENCE [GENOMIC DNA]</scope>
</reference>
<reference key="2">
    <citation type="submission" date="2000-10" db="EMBL/GenBank/DDBJ databases">
        <title>Molecular cloning of cytochrome b561 from Arabidopsis thaliana.</title>
        <authorList>
            <person name="Asada A."/>
            <person name="Kusakawa T."/>
            <person name="Orii H."/>
            <person name="Watanabe K."/>
            <person name="Tsubaki M."/>
        </authorList>
    </citation>
    <scope>NUCLEOTIDE SEQUENCE [MRNA]</scope>
</reference>
<reference key="3">
    <citation type="journal article" date="1997" name="DNA Res.">
        <title>Structural analysis of Arabidopsis thaliana chromosome 5. I. Sequence features of the 1.6 Mb regions covered by twenty physically assigned P1 clones.</title>
        <authorList>
            <person name="Sato S."/>
            <person name="Kotani H."/>
            <person name="Nakamura Y."/>
            <person name="Kaneko T."/>
            <person name="Asamizu E."/>
            <person name="Fukami M."/>
            <person name="Miyajima N."/>
            <person name="Tabata S."/>
        </authorList>
    </citation>
    <scope>NUCLEOTIDE SEQUENCE [LARGE SCALE GENOMIC DNA]</scope>
    <source>
        <strain>cv. Columbia</strain>
    </source>
</reference>
<reference key="4">
    <citation type="journal article" date="2017" name="Plant J.">
        <title>Araport11: a complete reannotation of the Arabidopsis thaliana reference genome.</title>
        <authorList>
            <person name="Cheng C.Y."/>
            <person name="Krishnakumar V."/>
            <person name="Chan A.P."/>
            <person name="Thibaud-Nissen F."/>
            <person name="Schobel S."/>
            <person name="Town C.D."/>
        </authorList>
    </citation>
    <scope>GENOME REANNOTATION</scope>
    <source>
        <strain>cv. Columbia</strain>
    </source>
</reference>
<reference key="5">
    <citation type="submission" date="2006-02" db="EMBL/GenBank/DDBJ databases">
        <title>Arabidopsis ORF clones.</title>
        <authorList>
            <person name="Shinn P."/>
            <person name="Chen H."/>
            <person name="Kim C.J."/>
            <person name="Ecker J.R."/>
        </authorList>
    </citation>
    <scope>NUCLEOTIDE SEQUENCE [LARGE SCALE MRNA]</scope>
    <source>
        <strain>cv. Columbia</strain>
    </source>
</reference>
<reference key="6">
    <citation type="submission" date="2002-03" db="EMBL/GenBank/DDBJ databases">
        <title>Full-length cDNA from Arabidopsis thaliana.</title>
        <authorList>
            <person name="Brover V.V."/>
            <person name="Troukhan M.E."/>
            <person name="Alexandrov N.A."/>
            <person name="Lu Y.-P."/>
            <person name="Flavell R.B."/>
            <person name="Feldmann K.A."/>
        </authorList>
    </citation>
    <scope>NUCLEOTIDE SEQUENCE [LARGE SCALE MRNA]</scope>
</reference>
<reference key="7">
    <citation type="journal article" date="2002" name="Science">
        <title>Functional annotation of a full-length Arabidopsis cDNA collection.</title>
        <authorList>
            <person name="Seki M."/>
            <person name="Narusaka M."/>
            <person name="Kamiya A."/>
            <person name="Ishida J."/>
            <person name="Satou M."/>
            <person name="Sakurai T."/>
            <person name="Nakajima M."/>
            <person name="Enju A."/>
            <person name="Akiyama K."/>
            <person name="Oono Y."/>
            <person name="Muramatsu M."/>
            <person name="Hayashizaki Y."/>
            <person name="Kawai J."/>
            <person name="Carninci P."/>
            <person name="Itoh M."/>
            <person name="Ishii Y."/>
            <person name="Arakawa T."/>
            <person name="Shibata K."/>
            <person name="Shinagawa A."/>
            <person name="Shinozaki K."/>
        </authorList>
    </citation>
    <scope>NUCLEOTIDE SEQUENCE [LARGE SCALE MRNA]</scope>
    <source>
        <strain>cv. Columbia</strain>
    </source>
</reference>
<reference key="8">
    <citation type="submission" date="1993-10" db="EMBL/GenBank/DDBJ databases">
        <title>The Arabidopsis thaliana transcribed genome: the GDR cDNA program.</title>
        <authorList>
            <person name="Desprez T."/>
            <person name="Amselem J."/>
            <person name="Chiapello H."/>
            <person name="Caboche M."/>
            <person name="Hofte H."/>
        </authorList>
    </citation>
    <scope>NUCLEOTIDE SEQUENCE [LARGE SCALE MRNA] OF 1-75</scope>
    <source>
        <strain>cv. Columbia</strain>
        <tissue>Seedling</tissue>
    </source>
</reference>
<reference key="9">
    <citation type="journal article" date="2001" name="Protoplasma">
        <title>Higher-plant plasma membrane cytochrome b561: a protein in search of a function.</title>
        <authorList>
            <person name="Asard H."/>
            <person name="Kapila J."/>
            <person name="Verelst W."/>
            <person name="Berczi A."/>
        </authorList>
    </citation>
    <scope>GENE FAMILY</scope>
    <scope>NOMENCLATURE</scope>
</reference>
<reference key="10">
    <citation type="journal article" date="2004" name="Physiol. Plantarum">
        <title>Tissue-specific expression and developmental regulation of cytochrome b561 genes in Arabidopsis thaliana and Raphanus sativus.</title>
        <authorList>
            <person name="Verelst W."/>
            <person name="Kapila J."/>
            <person name="De Almeida Engler J."/>
            <person name="Stone J.M."/>
            <person name="Caubergs R."/>
            <person name="Asard H."/>
        </authorList>
    </citation>
    <scope>TISSUE SPECIFICITY</scope>
    <scope>DEVELOPMENTAL STAGE</scope>
</reference>
<reference key="11">
    <citation type="journal article" date="2005" name="Biochim. Biophys. Acta">
        <title>Cytochrome b561 protein family: expanding roles and versatile transmembrane electron transfer abilities as predicted by a new classification system and protein sequence motif analyses.</title>
        <authorList>
            <person name="Tsubaki M."/>
            <person name="Takeuchi F."/>
            <person name="Nakanishi N."/>
        </authorList>
    </citation>
    <scope>GENE FAMILY</scope>
    <scope>NOMENCLATURE</scope>
</reference>
<reference key="12">
    <citation type="journal article" date="2013" name="Antioxid. Redox Signal.">
        <title>Cytochromes b561: ascorbate-mediated trans-membrane electron transport.</title>
        <authorList>
            <person name="Asard H."/>
            <person name="Barbaro R."/>
            <person name="Trost P."/>
            <person name="Berczi A."/>
        </authorList>
    </citation>
    <scope>REVIEW</scope>
</reference>
<reference key="13">
    <citation type="journal article" date="2014" name="Proc. Natl. Acad. Sci. U.S.A.">
        <title>Structure and mechanism of a eukaryotic transmembrane ascorbate-dependent oxidoreductase.</title>
        <authorList>
            <person name="Lu P."/>
            <person name="Ma D."/>
            <person name="Yan C."/>
            <person name="Gong X."/>
            <person name="Du M."/>
            <person name="Shi Y."/>
        </authorList>
    </citation>
    <scope>X-RAY CRYSTALLOGRAPHY (1.70 ANGSTROMS) IN COMPLEX WITH ASCORBATE; MONODEHYDROASCORBATE AND HEME</scope>
    <scope>COFACTOR</scope>
    <scope>SUBUNIT</scope>
    <scope>MUTAGENESIS OF LYS-81; PHE-105; HIS-106 AND ARG-150</scope>
    <scope>FUNCTION</scope>
    <scope>CATALYTIC ACTIVITY</scope>
    <scope>SUBCELLULAR LOCATION</scope>
    <scope>TOPOLOGY</scope>
</reference>
<feature type="chain" id="PRO_0000412908" description="Transmembrane ascorbate ferrireductase 2">
    <location>
        <begin position="1"/>
        <end position="230"/>
    </location>
</feature>
<feature type="transmembrane region" description="Helical; Name=1" evidence="1">
    <location>
        <begin position="5"/>
        <end position="25"/>
    </location>
</feature>
<feature type="transmembrane region" description="Helical; Name=2" evidence="1">
    <location>
        <begin position="50"/>
        <end position="70"/>
    </location>
</feature>
<feature type="transmembrane region" description="Helical; Name=3" evidence="1">
    <location>
        <begin position="82"/>
        <end position="102"/>
    </location>
</feature>
<feature type="transmembrane region" description="Helical; Name=4" evidence="1">
    <location>
        <begin position="120"/>
        <end position="140"/>
    </location>
</feature>
<feature type="transmembrane region" description="Helical; Name=5" evidence="1">
    <location>
        <begin position="157"/>
        <end position="177"/>
    </location>
</feature>
<feature type="transmembrane region" description="Helical; Name=6" evidence="1">
    <location>
        <begin position="198"/>
        <end position="218"/>
    </location>
</feature>
<feature type="domain" description="Cytochrome b561" evidence="2">
    <location>
        <begin position="14"/>
        <end position="218"/>
    </location>
</feature>
<feature type="binding site" description="axial binding residue" evidence="4">
    <location>
        <position position="51"/>
    </location>
    <ligand>
        <name>heme b</name>
        <dbReference type="ChEBI" id="CHEBI:60344"/>
        <label>1</label>
    </ligand>
    <ligandPart>
        <name>Fe</name>
        <dbReference type="ChEBI" id="CHEBI:18248"/>
    </ligandPart>
</feature>
<feature type="binding site" evidence="4">
    <location>
        <position position="77"/>
    </location>
    <ligand>
        <name>L-ascorbate</name>
        <dbReference type="ChEBI" id="CHEBI:38290"/>
    </ligand>
</feature>
<feature type="binding site" evidence="4">
    <location>
        <position position="81"/>
    </location>
    <ligand>
        <name>L-ascorbate</name>
        <dbReference type="ChEBI" id="CHEBI:38290"/>
    </ligand>
</feature>
<feature type="binding site" description="axial binding residue" evidence="4">
    <location>
        <position position="84"/>
    </location>
    <ligand>
        <name>heme b</name>
        <dbReference type="ChEBI" id="CHEBI:60344"/>
        <label>2</label>
    </ligand>
    <ligandPart>
        <name>Fe</name>
        <dbReference type="ChEBI" id="CHEBI:18248"/>
    </ligandPart>
</feature>
<feature type="binding site" evidence="4">
    <location>
        <position position="105"/>
    </location>
    <ligand>
        <name>monodehydro-L-ascorbate radical</name>
        <dbReference type="ChEBI" id="CHEBI:59513"/>
    </ligand>
</feature>
<feature type="binding site" evidence="4">
    <location>
        <position position="106"/>
    </location>
    <ligand>
        <name>monodehydro-L-ascorbate radical</name>
        <dbReference type="ChEBI" id="CHEBI:59513"/>
    </ligand>
</feature>
<feature type="binding site" evidence="4">
    <location>
        <position position="115"/>
    </location>
    <ligand>
        <name>monodehydro-L-ascorbate radical</name>
        <dbReference type="ChEBI" id="CHEBI:59513"/>
    </ligand>
</feature>
<feature type="binding site" description="axial binding residue" evidence="4">
    <location>
        <position position="118"/>
    </location>
    <ligand>
        <name>heme b</name>
        <dbReference type="ChEBI" id="CHEBI:60344"/>
        <label>1</label>
    </ligand>
    <ligandPart>
        <name>Fe</name>
        <dbReference type="ChEBI" id="CHEBI:18248"/>
    </ligandPart>
</feature>
<feature type="binding site" evidence="4">
    <location>
        <position position="140"/>
    </location>
    <ligand>
        <name>L-ascorbate</name>
        <dbReference type="ChEBI" id="CHEBI:38290"/>
    </ligand>
</feature>
<feature type="binding site" evidence="4">
    <location>
        <position position="150"/>
    </location>
    <ligand>
        <name>L-ascorbate</name>
        <dbReference type="ChEBI" id="CHEBI:38290"/>
    </ligand>
</feature>
<feature type="binding site" evidence="4">
    <location>
        <position position="151"/>
    </location>
    <ligand>
        <name>L-ascorbate</name>
        <dbReference type="ChEBI" id="CHEBI:38290"/>
    </ligand>
</feature>
<feature type="binding site" description="axial binding residue" evidence="4">
    <location>
        <position position="157"/>
    </location>
    <ligand>
        <name>heme b</name>
        <dbReference type="ChEBI" id="CHEBI:60344"/>
        <label>2</label>
    </ligand>
    <ligandPart>
        <name>Fe</name>
        <dbReference type="ChEBI" id="CHEBI:18248"/>
    </ligandPart>
</feature>
<feature type="binding site" evidence="4">
    <location>
        <position position="182"/>
    </location>
    <ligand>
        <name>monodehydro-L-ascorbate radical</name>
        <dbReference type="ChEBI" id="CHEBI:59513"/>
    </ligand>
</feature>
<feature type="binding site" evidence="4">
    <location>
        <position position="186"/>
    </location>
    <ligand>
        <name>monodehydro-L-ascorbate radical</name>
        <dbReference type="ChEBI" id="CHEBI:59513"/>
    </ligand>
</feature>
<feature type="mutagenesis site" description="Abrogates electron transfer; when associated with W-105/E-106/A-150." evidence="4">
    <original>K</original>
    <variation>A</variation>
    <location>
        <position position="81"/>
    </location>
</feature>
<feature type="mutagenesis site" description="Abrogates electron transfer; when associated with A-81/E-106/A-150." evidence="4">
    <original>F</original>
    <variation>W</variation>
    <location>
        <position position="105"/>
    </location>
</feature>
<feature type="mutagenesis site" description="Abrogates electron transfer; when associated with A-81/W-105/A-150." evidence="4">
    <original>H</original>
    <variation>E</variation>
    <location>
        <position position="106"/>
    </location>
</feature>
<feature type="mutagenesis site" description="Abrogates electron transfer; when associated with A-81/W-105/E-106." evidence="4">
    <original>R</original>
    <variation>A</variation>
    <location>
        <position position="150"/>
    </location>
</feature>
<feature type="helix" evidence="6">
    <location>
        <begin position="11"/>
        <end position="31"/>
    </location>
</feature>
<feature type="helix" evidence="6">
    <location>
        <begin position="44"/>
        <end position="59"/>
    </location>
</feature>
<feature type="helix" evidence="6">
    <location>
        <begin position="61"/>
        <end position="67"/>
    </location>
</feature>
<feature type="helix" evidence="6">
    <location>
        <begin position="69"/>
        <end position="72"/>
    </location>
</feature>
<feature type="helix" evidence="6">
    <location>
        <begin position="77"/>
        <end position="109"/>
    </location>
</feature>
<feature type="helix" evidence="6">
    <location>
        <begin position="117"/>
        <end position="140"/>
    </location>
</feature>
<feature type="helix" evidence="6">
    <location>
        <begin position="147"/>
        <end position="185"/>
    </location>
</feature>
<feature type="helix" evidence="6">
    <location>
        <begin position="194"/>
        <end position="218"/>
    </location>
</feature>